<protein>
    <recommendedName>
        <fullName evidence="1">Fluoride-specific ion channel FluC 2</fullName>
    </recommendedName>
</protein>
<reference key="1">
    <citation type="journal article" date="2002" name="Genome Res.">
        <title>The genome of Methanosarcina acetivorans reveals extensive metabolic and physiological diversity.</title>
        <authorList>
            <person name="Galagan J.E."/>
            <person name="Nusbaum C."/>
            <person name="Roy A."/>
            <person name="Endrizzi M.G."/>
            <person name="Macdonald P."/>
            <person name="FitzHugh W."/>
            <person name="Calvo S."/>
            <person name="Engels R."/>
            <person name="Smirnov S."/>
            <person name="Atnoor D."/>
            <person name="Brown A."/>
            <person name="Allen N."/>
            <person name="Naylor J."/>
            <person name="Stange-Thomann N."/>
            <person name="DeArellano K."/>
            <person name="Johnson R."/>
            <person name="Linton L."/>
            <person name="McEwan P."/>
            <person name="McKernan K."/>
            <person name="Talamas J."/>
            <person name="Tirrell A."/>
            <person name="Ye W."/>
            <person name="Zimmer A."/>
            <person name="Barber R.D."/>
            <person name="Cann I."/>
            <person name="Graham D.E."/>
            <person name="Grahame D.A."/>
            <person name="Guss A.M."/>
            <person name="Hedderich R."/>
            <person name="Ingram-Smith C."/>
            <person name="Kuettner H.C."/>
            <person name="Krzycki J.A."/>
            <person name="Leigh J.A."/>
            <person name="Li W."/>
            <person name="Liu J."/>
            <person name="Mukhopadhyay B."/>
            <person name="Reeve J.N."/>
            <person name="Smith K."/>
            <person name="Springer T.A."/>
            <person name="Umayam L.A."/>
            <person name="White O."/>
            <person name="White R.H."/>
            <person name="de Macario E.C."/>
            <person name="Ferry J.G."/>
            <person name="Jarrell K.F."/>
            <person name="Jing H."/>
            <person name="Macario A.J.L."/>
            <person name="Paulsen I.T."/>
            <person name="Pritchett M."/>
            <person name="Sowers K.R."/>
            <person name="Swanson R.V."/>
            <person name="Zinder S.H."/>
            <person name="Lander E."/>
            <person name="Metcalf W.W."/>
            <person name="Birren B."/>
        </authorList>
    </citation>
    <scope>NUCLEOTIDE SEQUENCE [LARGE SCALE GENOMIC DNA]</scope>
    <source>
        <strain>ATCC 35395 / DSM 2834 / JCM 12185 / C2A</strain>
    </source>
</reference>
<gene>
    <name evidence="1" type="primary">fluC2</name>
    <name evidence="1" type="synonym">crcB2</name>
    <name type="ordered locus">MA_4088</name>
</gene>
<feature type="chain" id="PRO_0000110226" description="Fluoride-specific ion channel FluC 2">
    <location>
        <begin position="1"/>
        <end position="126"/>
    </location>
</feature>
<feature type="transmembrane region" description="Helical" evidence="1">
    <location>
        <begin position="11"/>
        <end position="31"/>
    </location>
</feature>
<feature type="transmembrane region" description="Helical" evidence="1">
    <location>
        <begin position="34"/>
        <end position="54"/>
    </location>
</feature>
<feature type="transmembrane region" description="Helical" evidence="1">
    <location>
        <begin position="66"/>
        <end position="86"/>
    </location>
</feature>
<feature type="transmembrane region" description="Helical" evidence="1">
    <location>
        <begin position="93"/>
        <end position="113"/>
    </location>
</feature>
<feature type="binding site" evidence="1">
    <location>
        <position position="76"/>
    </location>
    <ligand>
        <name>Na(+)</name>
        <dbReference type="ChEBI" id="CHEBI:29101"/>
        <note>structural</note>
    </ligand>
</feature>
<feature type="binding site" evidence="1">
    <location>
        <position position="79"/>
    </location>
    <ligand>
        <name>Na(+)</name>
        <dbReference type="ChEBI" id="CHEBI:29101"/>
        <note>structural</note>
    </ligand>
</feature>
<sequence length="126" mass="13496">MPSQDKEIDKIFLIGAGGFLGAVCRFLLCELVEGQLGILSVNVIGSFMLGMIMYDTEYLGFIGPKGKIAFGTGFMGAFTTFSTFAVQSFSLPFIPALGNISANIFLTLTGVFFGRSVIKALSSREI</sequence>
<comment type="function">
    <text evidence="1">Fluoride-specific ion channel. Important for reducing fluoride concentration in the cell, thus reducing its toxicity.</text>
</comment>
<comment type="catalytic activity">
    <reaction evidence="1">
        <text>fluoride(in) = fluoride(out)</text>
        <dbReference type="Rhea" id="RHEA:76159"/>
        <dbReference type="ChEBI" id="CHEBI:17051"/>
    </reaction>
    <physiologicalReaction direction="left-to-right" evidence="1">
        <dbReference type="Rhea" id="RHEA:76160"/>
    </physiologicalReaction>
</comment>
<comment type="activity regulation">
    <text evidence="1">Na(+) is not transported, but it plays an essential structural role and its presence is essential for fluoride channel function.</text>
</comment>
<comment type="subcellular location">
    <subcellularLocation>
        <location evidence="1">Cell membrane</location>
        <topology evidence="1">Multi-pass membrane protein</topology>
    </subcellularLocation>
</comment>
<comment type="similarity">
    <text evidence="1">Belongs to the fluoride channel Fluc/FEX (TC 1.A.43) family.</text>
</comment>
<comment type="sequence caution" evidence="2">
    <conflict type="erroneous initiation">
        <sequence resource="EMBL-CDS" id="AAM07436"/>
    </conflict>
</comment>
<organism>
    <name type="scientific">Methanosarcina acetivorans (strain ATCC 35395 / DSM 2834 / JCM 12185 / C2A)</name>
    <dbReference type="NCBI Taxonomy" id="188937"/>
    <lineage>
        <taxon>Archaea</taxon>
        <taxon>Methanobacteriati</taxon>
        <taxon>Methanobacteriota</taxon>
        <taxon>Stenosarchaea group</taxon>
        <taxon>Methanomicrobia</taxon>
        <taxon>Methanosarcinales</taxon>
        <taxon>Methanosarcinaceae</taxon>
        <taxon>Methanosarcina</taxon>
    </lineage>
</organism>
<evidence type="ECO:0000255" key="1">
    <source>
        <dbReference type="HAMAP-Rule" id="MF_00454"/>
    </source>
</evidence>
<evidence type="ECO:0000305" key="2"/>
<keyword id="KW-1003">Cell membrane</keyword>
<keyword id="KW-0407">Ion channel</keyword>
<keyword id="KW-0406">Ion transport</keyword>
<keyword id="KW-0472">Membrane</keyword>
<keyword id="KW-0479">Metal-binding</keyword>
<keyword id="KW-1185">Reference proteome</keyword>
<keyword id="KW-0915">Sodium</keyword>
<keyword id="KW-0812">Transmembrane</keyword>
<keyword id="KW-1133">Transmembrane helix</keyword>
<keyword id="KW-0813">Transport</keyword>
<proteinExistence type="inferred from homology"/>
<name>FLUC2_METAC</name>
<accession>Q8TIQ4</accession>
<dbReference type="EMBL" id="AE010299">
    <property type="protein sequence ID" value="AAM07436.1"/>
    <property type="status" value="ALT_INIT"/>
    <property type="molecule type" value="Genomic_DNA"/>
</dbReference>
<dbReference type="RefSeq" id="WP_048066568.1">
    <property type="nucleotide sequence ID" value="NC_003552.1"/>
</dbReference>
<dbReference type="SMR" id="Q8TIQ4"/>
<dbReference type="STRING" id="188937.MA_4088"/>
<dbReference type="EnsemblBacteria" id="AAM07436">
    <property type="protein sequence ID" value="AAM07436"/>
    <property type="gene ID" value="MA_4088"/>
</dbReference>
<dbReference type="GeneID" id="1475982"/>
<dbReference type="KEGG" id="mac:MA_4088"/>
<dbReference type="HOGENOM" id="CLU_114342_1_4_2"/>
<dbReference type="InParanoid" id="Q8TIQ4"/>
<dbReference type="OrthoDB" id="253428at2157"/>
<dbReference type="PhylomeDB" id="Q8TIQ4"/>
<dbReference type="Proteomes" id="UP000002487">
    <property type="component" value="Chromosome"/>
</dbReference>
<dbReference type="GO" id="GO:0005886">
    <property type="term" value="C:plasma membrane"/>
    <property type="evidence" value="ECO:0000318"/>
    <property type="project" value="GO_Central"/>
</dbReference>
<dbReference type="GO" id="GO:0062054">
    <property type="term" value="F:fluoride channel activity"/>
    <property type="evidence" value="ECO:0007669"/>
    <property type="project" value="UniProtKB-UniRule"/>
</dbReference>
<dbReference type="GO" id="GO:1903425">
    <property type="term" value="F:fluoride transmembrane transporter activity"/>
    <property type="evidence" value="ECO:0000318"/>
    <property type="project" value="GO_Central"/>
</dbReference>
<dbReference type="GO" id="GO:0046872">
    <property type="term" value="F:metal ion binding"/>
    <property type="evidence" value="ECO:0007669"/>
    <property type="project" value="UniProtKB-KW"/>
</dbReference>
<dbReference type="GO" id="GO:0140114">
    <property type="term" value="P:cellular detoxification of fluoride"/>
    <property type="evidence" value="ECO:0007669"/>
    <property type="project" value="UniProtKB-UniRule"/>
</dbReference>
<dbReference type="GO" id="GO:1903424">
    <property type="term" value="P:fluoride transmembrane transport"/>
    <property type="evidence" value="ECO:0000318"/>
    <property type="project" value="GO_Central"/>
</dbReference>
<dbReference type="HAMAP" id="MF_00454">
    <property type="entry name" value="FluC"/>
    <property type="match status" value="1"/>
</dbReference>
<dbReference type="InterPro" id="IPR003691">
    <property type="entry name" value="FluC"/>
</dbReference>
<dbReference type="NCBIfam" id="NF010820">
    <property type="entry name" value="PRK14224.1"/>
    <property type="match status" value="1"/>
</dbReference>
<dbReference type="PANTHER" id="PTHR28259">
    <property type="entry name" value="FLUORIDE EXPORT PROTEIN 1-RELATED"/>
    <property type="match status" value="1"/>
</dbReference>
<dbReference type="PANTHER" id="PTHR28259:SF1">
    <property type="entry name" value="FLUORIDE EXPORT PROTEIN 1-RELATED"/>
    <property type="match status" value="1"/>
</dbReference>
<dbReference type="Pfam" id="PF02537">
    <property type="entry name" value="CRCB"/>
    <property type="match status" value="1"/>
</dbReference>